<reference key="1">
    <citation type="journal article" date="2007" name="PLoS Genet.">
        <title>Patterns and implications of gene gain and loss in the evolution of Prochlorococcus.</title>
        <authorList>
            <person name="Kettler G.C."/>
            <person name="Martiny A.C."/>
            <person name="Huang K."/>
            <person name="Zucker J."/>
            <person name="Coleman M.L."/>
            <person name="Rodrigue S."/>
            <person name="Chen F."/>
            <person name="Lapidus A."/>
            <person name="Ferriera S."/>
            <person name="Johnson J."/>
            <person name="Steglich C."/>
            <person name="Church G.M."/>
            <person name="Richardson P."/>
            <person name="Chisholm S.W."/>
        </authorList>
    </citation>
    <scope>NUCLEOTIDE SEQUENCE [LARGE SCALE GENOMIC DNA]</scope>
    <source>
        <strain>NATL2A</strain>
    </source>
</reference>
<organism>
    <name type="scientific">Prochlorococcus marinus (strain NATL2A)</name>
    <dbReference type="NCBI Taxonomy" id="59920"/>
    <lineage>
        <taxon>Bacteria</taxon>
        <taxon>Bacillati</taxon>
        <taxon>Cyanobacteriota</taxon>
        <taxon>Cyanophyceae</taxon>
        <taxon>Synechococcales</taxon>
        <taxon>Prochlorococcaceae</taxon>
        <taxon>Prochlorococcus</taxon>
    </lineage>
</organism>
<comment type="function">
    <text evidence="1">Catalyzes the rearrangement of 1-deoxy-D-xylulose 5-phosphate (DXP) to produce the thiazole phosphate moiety of thiamine. Sulfur is provided by the thiocarboxylate moiety of the carrier protein ThiS. In vitro, sulfur can be provided by H(2)S.</text>
</comment>
<comment type="catalytic activity">
    <reaction evidence="1">
        <text>[ThiS sulfur-carrier protein]-C-terminal-Gly-aminoethanethioate + 2-iminoacetate + 1-deoxy-D-xylulose 5-phosphate = [ThiS sulfur-carrier protein]-C-terminal Gly-Gly + 2-[(2R,5Z)-2-carboxy-4-methylthiazol-5(2H)-ylidene]ethyl phosphate + 2 H2O + H(+)</text>
        <dbReference type="Rhea" id="RHEA:26297"/>
        <dbReference type="Rhea" id="RHEA-COMP:12909"/>
        <dbReference type="Rhea" id="RHEA-COMP:19908"/>
        <dbReference type="ChEBI" id="CHEBI:15377"/>
        <dbReference type="ChEBI" id="CHEBI:15378"/>
        <dbReference type="ChEBI" id="CHEBI:57792"/>
        <dbReference type="ChEBI" id="CHEBI:62899"/>
        <dbReference type="ChEBI" id="CHEBI:77846"/>
        <dbReference type="ChEBI" id="CHEBI:90778"/>
        <dbReference type="ChEBI" id="CHEBI:232372"/>
        <dbReference type="EC" id="2.8.1.10"/>
    </reaction>
</comment>
<comment type="pathway">
    <text evidence="1">Cofactor biosynthesis; thiamine diphosphate biosynthesis.</text>
</comment>
<comment type="subunit">
    <text evidence="1">Homotetramer. Forms heterodimers with either ThiH or ThiS.</text>
</comment>
<comment type="subcellular location">
    <subcellularLocation>
        <location evidence="1">Cytoplasm</location>
    </subcellularLocation>
</comment>
<comment type="similarity">
    <text evidence="1">Belongs to the ThiG family.</text>
</comment>
<dbReference type="EC" id="2.8.1.10" evidence="1"/>
<dbReference type="EMBL" id="CP000095">
    <property type="protein sequence ID" value="AAZ58752.1"/>
    <property type="molecule type" value="Genomic_DNA"/>
</dbReference>
<dbReference type="RefSeq" id="WP_011295606.1">
    <property type="nucleotide sequence ID" value="NC_007335.2"/>
</dbReference>
<dbReference type="SMR" id="Q46IC6"/>
<dbReference type="STRING" id="59920.PMN2A_1262"/>
<dbReference type="KEGG" id="pmn:PMN2A_1262"/>
<dbReference type="HOGENOM" id="CLU_062233_1_0_3"/>
<dbReference type="OrthoDB" id="9805935at2"/>
<dbReference type="PhylomeDB" id="Q46IC6"/>
<dbReference type="UniPathway" id="UPA00060"/>
<dbReference type="Proteomes" id="UP000002535">
    <property type="component" value="Chromosome"/>
</dbReference>
<dbReference type="GO" id="GO:0005737">
    <property type="term" value="C:cytoplasm"/>
    <property type="evidence" value="ECO:0007669"/>
    <property type="project" value="UniProtKB-SubCell"/>
</dbReference>
<dbReference type="GO" id="GO:1990107">
    <property type="term" value="F:thiazole synthase activity"/>
    <property type="evidence" value="ECO:0007669"/>
    <property type="project" value="UniProtKB-EC"/>
</dbReference>
<dbReference type="GO" id="GO:0009229">
    <property type="term" value="P:thiamine diphosphate biosynthetic process"/>
    <property type="evidence" value="ECO:0007669"/>
    <property type="project" value="UniProtKB-UniRule"/>
</dbReference>
<dbReference type="CDD" id="cd04728">
    <property type="entry name" value="ThiG"/>
    <property type="match status" value="1"/>
</dbReference>
<dbReference type="Gene3D" id="3.20.20.70">
    <property type="entry name" value="Aldolase class I"/>
    <property type="match status" value="1"/>
</dbReference>
<dbReference type="HAMAP" id="MF_00443">
    <property type="entry name" value="ThiG"/>
    <property type="match status" value="1"/>
</dbReference>
<dbReference type="InterPro" id="IPR013785">
    <property type="entry name" value="Aldolase_TIM"/>
</dbReference>
<dbReference type="InterPro" id="IPR033983">
    <property type="entry name" value="Thiazole_synthase_ThiG"/>
</dbReference>
<dbReference type="InterPro" id="IPR008867">
    <property type="entry name" value="ThiG"/>
</dbReference>
<dbReference type="PANTHER" id="PTHR34266">
    <property type="entry name" value="THIAZOLE SYNTHASE"/>
    <property type="match status" value="1"/>
</dbReference>
<dbReference type="PANTHER" id="PTHR34266:SF2">
    <property type="entry name" value="THIAZOLE SYNTHASE"/>
    <property type="match status" value="1"/>
</dbReference>
<dbReference type="Pfam" id="PF05690">
    <property type="entry name" value="ThiG"/>
    <property type="match status" value="1"/>
</dbReference>
<dbReference type="SUPFAM" id="SSF110399">
    <property type="entry name" value="ThiG-like"/>
    <property type="match status" value="1"/>
</dbReference>
<proteinExistence type="inferred from homology"/>
<accession>Q46IC6</accession>
<evidence type="ECO:0000255" key="1">
    <source>
        <dbReference type="HAMAP-Rule" id="MF_00443"/>
    </source>
</evidence>
<evidence type="ECO:0000256" key="2">
    <source>
        <dbReference type="SAM" id="MobiDB-lite"/>
    </source>
</evidence>
<gene>
    <name evidence="1" type="primary">thiG</name>
    <name type="ordered locus">PMN2A_1262</name>
</gene>
<feature type="chain" id="PRO_0000236354" description="Thiazole synthase">
    <location>
        <begin position="1"/>
        <end position="268"/>
    </location>
</feature>
<feature type="region of interest" description="Disordered" evidence="2">
    <location>
        <begin position="248"/>
        <end position="268"/>
    </location>
</feature>
<feature type="compositionally biased region" description="Polar residues" evidence="2">
    <location>
        <begin position="255"/>
        <end position="268"/>
    </location>
</feature>
<feature type="active site" description="Schiff-base intermediate with DXP" evidence="1">
    <location>
        <position position="108"/>
    </location>
</feature>
<feature type="binding site" evidence="1">
    <location>
        <position position="169"/>
    </location>
    <ligand>
        <name>1-deoxy-D-xylulose 5-phosphate</name>
        <dbReference type="ChEBI" id="CHEBI:57792"/>
    </ligand>
</feature>
<feature type="binding site" evidence="1">
    <location>
        <begin position="195"/>
        <end position="196"/>
    </location>
    <ligand>
        <name>1-deoxy-D-xylulose 5-phosphate</name>
        <dbReference type="ChEBI" id="CHEBI:57792"/>
    </ligand>
</feature>
<feature type="binding site" evidence="1">
    <location>
        <begin position="217"/>
        <end position="218"/>
    </location>
    <ligand>
        <name>1-deoxy-D-xylulose 5-phosphate</name>
        <dbReference type="ChEBI" id="CHEBI:57792"/>
    </ligand>
</feature>
<protein>
    <recommendedName>
        <fullName evidence="1">Thiazole synthase</fullName>
        <ecNumber evidence="1">2.8.1.10</ecNumber>
    </recommendedName>
</protein>
<keyword id="KW-0963">Cytoplasm</keyword>
<keyword id="KW-1185">Reference proteome</keyword>
<keyword id="KW-0704">Schiff base</keyword>
<keyword id="KW-0784">Thiamine biosynthesis</keyword>
<keyword id="KW-0808">Transferase</keyword>
<name>THIG_PROMT</name>
<sequence>MQKTNKFLKIGNKEFKSRLLVGTGKYSSLEVMQKSLINTKCEIVTVAVRRVQGLEHGHKGLMESIDWKRIWMLPNTAGCSNAEEAIRIARLGRELAKLAGQETNNFVKLEVIPDKKYLLPDPIGTLKAAEQLVKEGFTVLPYINSDPLIAKQLEEIGCATVMPLGSPIGSAQGIRNAANIAMIIAESRIPIIIDAGIGVPSEAAQALEMGADGVLINSAIALAENPILMAQAFSKATEAGRDGYLSGRLKENPLASPSSPLDGVISNN</sequence>